<accession>P0AEV7</accession>
<accession>P16434</accession>
<accession>Q2MAB1</accession>
<gene>
    <name type="primary">hycH</name>
    <name type="synonym">hevH</name>
    <name type="ordered locus">b2718</name>
    <name type="ordered locus">JW2688</name>
</gene>
<organism>
    <name type="scientific">Escherichia coli (strain K12)</name>
    <dbReference type="NCBI Taxonomy" id="83333"/>
    <lineage>
        <taxon>Bacteria</taxon>
        <taxon>Pseudomonadati</taxon>
        <taxon>Pseudomonadota</taxon>
        <taxon>Gammaproteobacteria</taxon>
        <taxon>Enterobacterales</taxon>
        <taxon>Enterobacteriaceae</taxon>
        <taxon>Escherichia</taxon>
    </lineage>
</organism>
<protein>
    <recommendedName>
        <fullName>Formate hydrogenlyase maturation protein HycH</fullName>
    </recommendedName>
</protein>
<proteinExistence type="predicted"/>
<feature type="chain" id="PRO_0000084103" description="Formate hydrogenlyase maturation protein HycH">
    <location>
        <begin position="1"/>
        <end position="136"/>
    </location>
</feature>
<dbReference type="EMBL" id="X17506">
    <property type="protein sequence ID" value="CAA35553.1"/>
    <property type="status" value="ALT_SEQ"/>
    <property type="molecule type" value="Genomic_DNA"/>
</dbReference>
<dbReference type="EMBL" id="U29579">
    <property type="protein sequence ID" value="AAA69228.1"/>
    <property type="molecule type" value="Genomic_DNA"/>
</dbReference>
<dbReference type="EMBL" id="U00096">
    <property type="protein sequence ID" value="AAC75760.1"/>
    <property type="molecule type" value="Genomic_DNA"/>
</dbReference>
<dbReference type="EMBL" id="AP009048">
    <property type="protein sequence ID" value="BAE76795.1"/>
    <property type="molecule type" value="Genomic_DNA"/>
</dbReference>
<dbReference type="PIR" id="S08626">
    <property type="entry name" value="S08626"/>
</dbReference>
<dbReference type="RefSeq" id="NP_417198.1">
    <property type="nucleotide sequence ID" value="NC_000913.3"/>
</dbReference>
<dbReference type="RefSeq" id="WP_001291921.1">
    <property type="nucleotide sequence ID" value="NZ_STEB01000027.1"/>
</dbReference>
<dbReference type="BioGRID" id="4262938">
    <property type="interactions" value="25"/>
</dbReference>
<dbReference type="FunCoup" id="P0AEV7">
    <property type="interactions" value="85"/>
</dbReference>
<dbReference type="IntAct" id="P0AEV7">
    <property type="interactions" value="2"/>
</dbReference>
<dbReference type="STRING" id="511145.b2718"/>
<dbReference type="PaxDb" id="511145-b2718"/>
<dbReference type="EnsemblBacteria" id="AAC75760">
    <property type="protein sequence ID" value="AAC75760"/>
    <property type="gene ID" value="b2718"/>
</dbReference>
<dbReference type="GeneID" id="75203128"/>
<dbReference type="GeneID" id="947438"/>
<dbReference type="KEGG" id="ecj:JW2688"/>
<dbReference type="KEGG" id="eco:b2718"/>
<dbReference type="KEGG" id="ecoc:C3026_14955"/>
<dbReference type="PATRIC" id="fig|1411691.4.peg.4023"/>
<dbReference type="EchoBASE" id="EB0476"/>
<dbReference type="eggNOG" id="ENOG502ZBMB">
    <property type="taxonomic scope" value="Bacteria"/>
</dbReference>
<dbReference type="HOGENOM" id="CLU_121340_0_0_6"/>
<dbReference type="InParanoid" id="P0AEV7"/>
<dbReference type="OMA" id="YLMVRRH"/>
<dbReference type="OrthoDB" id="3173483at2"/>
<dbReference type="PhylomeDB" id="P0AEV7"/>
<dbReference type="BioCyc" id="EcoCyc:EG10481-MONOMER"/>
<dbReference type="PRO" id="PR:P0AEV7"/>
<dbReference type="Proteomes" id="UP000000625">
    <property type="component" value="Chromosome"/>
</dbReference>
<dbReference type="GO" id="GO:0065003">
    <property type="term" value="P:protein-containing complex assembly"/>
    <property type="evidence" value="ECO:0000314"/>
    <property type="project" value="EcoCyc"/>
</dbReference>
<dbReference type="InterPro" id="IPR010005">
    <property type="entry name" value="Formate_DH_maturation_HycH"/>
</dbReference>
<dbReference type="NCBIfam" id="NF011664">
    <property type="entry name" value="PRK15084.1"/>
    <property type="match status" value="1"/>
</dbReference>
<dbReference type="Pfam" id="PF07450">
    <property type="entry name" value="HycH"/>
    <property type="match status" value="1"/>
</dbReference>
<keyword id="KW-1185">Reference proteome</keyword>
<comment type="function">
    <text evidence="1">Seems to be required for the conversion of a precursor form of the large subunit of hydrogenlyase (HycE) into a mature form.</text>
</comment>
<comment type="similarity">
    <text evidence="2">To E.coli HyfJ.</text>
</comment>
<name>HYCH_ECOLI</name>
<sequence>MSEKVVFSQLSRKFIDENDATPAEAQQVVYYSLAIGHHLGVIDCLEAALTCPWDEYLAWIATLEAGSEARRKMEGVPKYGEIVIDINHVPMLANAFDKARAAQTSQQQEWSTMLLSMLHDIHQENAIYLMVRRLRD</sequence>
<evidence type="ECO:0000269" key="1">
    <source>
    </source>
</evidence>
<evidence type="ECO:0000305" key="2"/>
<reference key="1">
    <citation type="journal article" date="1990" name="Mol. Microbiol.">
        <title>Nucleotide sequence and expression of an operon in Escherichia coli coding for formate hydrogenlyase components.</title>
        <authorList>
            <person name="Boehm R."/>
            <person name="Sauter M."/>
            <person name="Boeck A."/>
        </authorList>
    </citation>
    <scope>NUCLEOTIDE SEQUENCE [GENOMIC DNA]</scope>
    <source>
        <strain>K12 / MC4100 / ATCC 35695 / DSM 6574</strain>
    </source>
</reference>
<reference key="2">
    <citation type="journal article" date="1997" name="Science">
        <title>The complete genome sequence of Escherichia coli K-12.</title>
        <authorList>
            <person name="Blattner F.R."/>
            <person name="Plunkett G. III"/>
            <person name="Bloch C.A."/>
            <person name="Perna N.T."/>
            <person name="Burland V."/>
            <person name="Riley M."/>
            <person name="Collado-Vides J."/>
            <person name="Glasner J.D."/>
            <person name="Rode C.K."/>
            <person name="Mayhew G.F."/>
            <person name="Gregor J."/>
            <person name="Davis N.W."/>
            <person name="Kirkpatrick H.A."/>
            <person name="Goeden M.A."/>
            <person name="Rose D.J."/>
            <person name="Mau B."/>
            <person name="Shao Y."/>
        </authorList>
    </citation>
    <scope>NUCLEOTIDE SEQUENCE [LARGE SCALE GENOMIC DNA]</scope>
    <source>
        <strain>K12 / MG1655 / ATCC 47076</strain>
    </source>
</reference>
<reference key="3">
    <citation type="journal article" date="2006" name="Mol. Syst. Biol.">
        <title>Highly accurate genome sequences of Escherichia coli K-12 strains MG1655 and W3110.</title>
        <authorList>
            <person name="Hayashi K."/>
            <person name="Morooka N."/>
            <person name="Yamamoto Y."/>
            <person name="Fujita K."/>
            <person name="Isono K."/>
            <person name="Choi S."/>
            <person name="Ohtsubo E."/>
            <person name="Baba T."/>
            <person name="Wanner B.L."/>
            <person name="Mori H."/>
            <person name="Horiuchi T."/>
        </authorList>
    </citation>
    <scope>NUCLEOTIDE SEQUENCE [LARGE SCALE GENOMIC DNA]</scope>
    <source>
        <strain>K12 / W3110 / ATCC 27325 / DSM 5911</strain>
    </source>
</reference>
<reference key="4">
    <citation type="journal article" date="1995" name="Eur. J. Biochem.">
        <title>Characterisation of a protease from Escherichia coli involved in hydrogenase maturation.</title>
        <authorList>
            <person name="Rossmann R."/>
            <person name="Maier T."/>
            <person name="Lottspeich F."/>
            <person name="Boeck A."/>
        </authorList>
    </citation>
    <scope>NUCLEOTIDE SEQUENCE [GENOMIC DNA] OF 130-136</scope>
    <source>
        <strain>K12 / MC4100 / ATCC 35695 / DSM 6574</strain>
    </source>
</reference>
<reference key="5">
    <citation type="journal article" date="1992" name="Mol. Microbiol.">
        <title>Mutational analysis of the operon (hyc) determining hydrogenase 3 formation in Escherichia coli.</title>
        <authorList>
            <person name="Sauter M."/>
            <person name="Boehm R."/>
            <person name="Boeck A."/>
        </authorList>
    </citation>
    <scope>FUNCTION</scope>
</reference>